<comment type="function">
    <text evidence="1">Part of the ABC transporter complex PotABCD involved in spermidine/putrescine import. Responsible for energy coupling to the transport system.</text>
</comment>
<comment type="catalytic activity">
    <reaction evidence="1">
        <text>ATP + H2O + polyamine-[polyamine-binding protein]Side 1 = ADP + phosphate + polyamineSide 2 + [polyamine-binding protein]Side 1.</text>
        <dbReference type="EC" id="7.6.2.11"/>
    </reaction>
</comment>
<comment type="subunit">
    <text evidence="1">The complex is composed of two ATP-binding proteins (PotA), two transmembrane proteins (PotB and PotC) and a solute-binding protein (PotD).</text>
</comment>
<comment type="subcellular location">
    <subcellularLocation>
        <location evidence="1">Cell inner membrane</location>
        <topology evidence="1">Peripheral membrane protein</topology>
    </subcellularLocation>
</comment>
<comment type="similarity">
    <text evidence="1">Belongs to the ABC transporter superfamily. Spermidine/putrescine importer (TC 3.A.1.11.1) family.</text>
</comment>
<comment type="sequence caution" evidence="2">
    <conflict type="erroneous initiation">
        <sequence resource="EMBL-CDS" id="AAX88590"/>
    </conflict>
</comment>
<name>POTA_HAEI8</name>
<sequence length="372" mass="42362">MENQPQNKPIIELRSIKKSYGSNTIINDFNLAINNGEFVTILGPSGCGKTTVLRLLAGLEELDSGSIILDGEDITNVPAEKRHINTVFQSYALFPHMTIFENVAFGLRMQKVPNEEIKPRVLEALRMVQLEEMADRKPTQLSGGQQQRIAIARAVVNKPKVLLLDESLSALDYKLRKQMQQELKMLQRQLGITFIFVTHDQEEAITMSDRIVLLRKGKIAQDGSPREIYEDPANLFVARFIGEINVFEATVIERKSEQVVLANVEGRICDIYTDMPVEKDQKLQVLLRPEDIVIEELDENEHSKAIIGHIIDRTYKGMTLESTVEFDHNGMRVLVSEFFNEDDPHMDHSIGQRVGITWHEGWEVVLNDEDNQ</sequence>
<gene>
    <name evidence="1" type="primary">potA</name>
    <name type="ordered locus">NTHI1820</name>
</gene>
<reference key="1">
    <citation type="journal article" date="2005" name="J. Bacteriol.">
        <title>Genomic sequence of an otitis media isolate of nontypeable Haemophilus influenzae: comparative study with H. influenzae serotype d, strain KW20.</title>
        <authorList>
            <person name="Harrison A."/>
            <person name="Dyer D.W."/>
            <person name="Gillaspy A."/>
            <person name="Ray W.C."/>
            <person name="Mungur R."/>
            <person name="Carson M.B."/>
            <person name="Zhong H."/>
            <person name="Gipson J."/>
            <person name="Gipson M."/>
            <person name="Johnson L.S."/>
            <person name="Lewis L."/>
            <person name="Bakaletz L.O."/>
            <person name="Munson R.S. Jr."/>
        </authorList>
    </citation>
    <scope>NUCLEOTIDE SEQUENCE [LARGE SCALE GENOMIC DNA]</scope>
    <source>
        <strain>86-028NP</strain>
    </source>
</reference>
<organism>
    <name type="scientific">Haemophilus influenzae (strain 86-028NP)</name>
    <dbReference type="NCBI Taxonomy" id="281310"/>
    <lineage>
        <taxon>Bacteria</taxon>
        <taxon>Pseudomonadati</taxon>
        <taxon>Pseudomonadota</taxon>
        <taxon>Gammaproteobacteria</taxon>
        <taxon>Pasteurellales</taxon>
        <taxon>Pasteurellaceae</taxon>
        <taxon>Haemophilus</taxon>
    </lineage>
</organism>
<evidence type="ECO:0000255" key="1">
    <source>
        <dbReference type="HAMAP-Rule" id="MF_01726"/>
    </source>
</evidence>
<evidence type="ECO:0000305" key="2"/>
<accession>Q4QK57</accession>
<keyword id="KW-0067">ATP-binding</keyword>
<keyword id="KW-0997">Cell inner membrane</keyword>
<keyword id="KW-1003">Cell membrane</keyword>
<keyword id="KW-0472">Membrane</keyword>
<keyword id="KW-0547">Nucleotide-binding</keyword>
<keyword id="KW-1278">Translocase</keyword>
<keyword id="KW-0813">Transport</keyword>
<feature type="chain" id="PRO_0000286223" description="Spermidine/putrescine import ATP-binding protein PotA">
    <location>
        <begin position="1"/>
        <end position="372"/>
    </location>
</feature>
<feature type="domain" description="ABC transporter" evidence="1">
    <location>
        <begin position="11"/>
        <end position="241"/>
    </location>
</feature>
<feature type="binding site" evidence="1">
    <location>
        <begin position="43"/>
        <end position="50"/>
    </location>
    <ligand>
        <name>ATP</name>
        <dbReference type="ChEBI" id="CHEBI:30616"/>
    </ligand>
</feature>
<proteinExistence type="inferred from homology"/>
<dbReference type="EC" id="7.6.2.11" evidence="1"/>
<dbReference type="EMBL" id="CP000057">
    <property type="protein sequence ID" value="AAX88590.1"/>
    <property type="status" value="ALT_INIT"/>
    <property type="molecule type" value="Genomic_DNA"/>
</dbReference>
<dbReference type="RefSeq" id="WP_005650696.1">
    <property type="nucleotide sequence ID" value="NC_007146.2"/>
</dbReference>
<dbReference type="SMR" id="Q4QK57"/>
<dbReference type="GeneID" id="93220531"/>
<dbReference type="KEGG" id="hit:NTHI1820"/>
<dbReference type="HOGENOM" id="CLU_000604_1_1_6"/>
<dbReference type="Proteomes" id="UP000002525">
    <property type="component" value="Chromosome"/>
</dbReference>
<dbReference type="GO" id="GO:0043190">
    <property type="term" value="C:ATP-binding cassette (ABC) transporter complex"/>
    <property type="evidence" value="ECO:0007669"/>
    <property type="project" value="InterPro"/>
</dbReference>
<dbReference type="GO" id="GO:0015594">
    <property type="term" value="F:ABC-type putrescine transporter activity"/>
    <property type="evidence" value="ECO:0007669"/>
    <property type="project" value="InterPro"/>
</dbReference>
<dbReference type="GO" id="GO:0005524">
    <property type="term" value="F:ATP binding"/>
    <property type="evidence" value="ECO:0007669"/>
    <property type="project" value="UniProtKB-KW"/>
</dbReference>
<dbReference type="GO" id="GO:0016887">
    <property type="term" value="F:ATP hydrolysis activity"/>
    <property type="evidence" value="ECO:0007669"/>
    <property type="project" value="InterPro"/>
</dbReference>
<dbReference type="CDD" id="cd03300">
    <property type="entry name" value="ABC_PotA_N"/>
    <property type="match status" value="1"/>
</dbReference>
<dbReference type="FunFam" id="3.40.50.300:FF:000133">
    <property type="entry name" value="Spermidine/putrescine import ATP-binding protein PotA"/>
    <property type="match status" value="1"/>
</dbReference>
<dbReference type="Gene3D" id="2.40.50.100">
    <property type="match status" value="1"/>
</dbReference>
<dbReference type="Gene3D" id="3.40.50.300">
    <property type="entry name" value="P-loop containing nucleotide triphosphate hydrolases"/>
    <property type="match status" value="1"/>
</dbReference>
<dbReference type="InterPro" id="IPR003593">
    <property type="entry name" value="AAA+_ATPase"/>
</dbReference>
<dbReference type="InterPro" id="IPR050093">
    <property type="entry name" value="ABC_SmlMolc_Importer"/>
</dbReference>
<dbReference type="InterPro" id="IPR003439">
    <property type="entry name" value="ABC_transporter-like_ATP-bd"/>
</dbReference>
<dbReference type="InterPro" id="IPR017871">
    <property type="entry name" value="ABC_transporter-like_CS"/>
</dbReference>
<dbReference type="InterPro" id="IPR008995">
    <property type="entry name" value="Mo/tungstate-bd_C_term_dom"/>
</dbReference>
<dbReference type="InterPro" id="IPR027417">
    <property type="entry name" value="P-loop_NTPase"/>
</dbReference>
<dbReference type="InterPro" id="IPR005893">
    <property type="entry name" value="PotA-like"/>
</dbReference>
<dbReference type="InterPro" id="IPR017879">
    <property type="entry name" value="PotA_ATP-bd"/>
</dbReference>
<dbReference type="InterPro" id="IPR013611">
    <property type="entry name" value="Transp-assoc_OB_typ2"/>
</dbReference>
<dbReference type="NCBIfam" id="TIGR01187">
    <property type="entry name" value="potA"/>
    <property type="match status" value="1"/>
</dbReference>
<dbReference type="NCBIfam" id="NF006987">
    <property type="entry name" value="PRK09452.1"/>
    <property type="match status" value="1"/>
</dbReference>
<dbReference type="PANTHER" id="PTHR42781">
    <property type="entry name" value="SPERMIDINE/PUTRESCINE IMPORT ATP-BINDING PROTEIN POTA"/>
    <property type="match status" value="1"/>
</dbReference>
<dbReference type="PANTHER" id="PTHR42781:SF4">
    <property type="entry name" value="SPERMIDINE_PUTRESCINE IMPORT ATP-BINDING PROTEIN POTA"/>
    <property type="match status" value="1"/>
</dbReference>
<dbReference type="Pfam" id="PF00005">
    <property type="entry name" value="ABC_tran"/>
    <property type="match status" value="1"/>
</dbReference>
<dbReference type="Pfam" id="PF08402">
    <property type="entry name" value="TOBE_2"/>
    <property type="match status" value="1"/>
</dbReference>
<dbReference type="SMART" id="SM00382">
    <property type="entry name" value="AAA"/>
    <property type="match status" value="1"/>
</dbReference>
<dbReference type="SUPFAM" id="SSF50331">
    <property type="entry name" value="MOP-like"/>
    <property type="match status" value="1"/>
</dbReference>
<dbReference type="SUPFAM" id="SSF52540">
    <property type="entry name" value="P-loop containing nucleoside triphosphate hydrolases"/>
    <property type="match status" value="1"/>
</dbReference>
<dbReference type="PROSITE" id="PS00211">
    <property type="entry name" value="ABC_TRANSPORTER_1"/>
    <property type="match status" value="1"/>
</dbReference>
<dbReference type="PROSITE" id="PS50893">
    <property type="entry name" value="ABC_TRANSPORTER_2"/>
    <property type="match status" value="1"/>
</dbReference>
<dbReference type="PROSITE" id="PS51305">
    <property type="entry name" value="POTA"/>
    <property type="match status" value="1"/>
</dbReference>
<protein>
    <recommendedName>
        <fullName evidence="1">Spermidine/putrescine import ATP-binding protein PotA</fullName>
        <ecNumber evidence="1">7.6.2.11</ecNumber>
    </recommendedName>
</protein>